<dbReference type="EMBL" id="LT708304">
    <property type="protein sequence ID" value="SIT99939.1"/>
    <property type="molecule type" value="Genomic_DNA"/>
</dbReference>
<dbReference type="RefSeq" id="NP_854990.1">
    <property type="nucleotide sequence ID" value="NC_002945.3"/>
</dbReference>
<dbReference type="RefSeq" id="WP_003406681.1">
    <property type="nucleotide sequence ID" value="NC_002945.4"/>
</dbReference>
<dbReference type="SMR" id="P63655"/>
<dbReference type="GeneID" id="45425278"/>
<dbReference type="KEGG" id="mbo:BQ2027_MB1336"/>
<dbReference type="PATRIC" id="fig|233413.5.peg.1465"/>
<dbReference type="Proteomes" id="UP000001419">
    <property type="component" value="Chromosome"/>
</dbReference>
<dbReference type="GO" id="GO:0005886">
    <property type="term" value="C:plasma membrane"/>
    <property type="evidence" value="ECO:0007669"/>
    <property type="project" value="UniProtKB-SubCell"/>
</dbReference>
<dbReference type="GO" id="GO:0045259">
    <property type="term" value="C:proton-transporting ATP synthase complex"/>
    <property type="evidence" value="ECO:0007669"/>
    <property type="project" value="UniProtKB-KW"/>
</dbReference>
<dbReference type="GO" id="GO:0046933">
    <property type="term" value="F:proton-transporting ATP synthase activity, rotational mechanism"/>
    <property type="evidence" value="ECO:0007669"/>
    <property type="project" value="UniProtKB-UniRule"/>
</dbReference>
<dbReference type="GO" id="GO:0042777">
    <property type="term" value="P:proton motive force-driven plasma membrane ATP synthesis"/>
    <property type="evidence" value="ECO:0007669"/>
    <property type="project" value="TreeGrafter"/>
</dbReference>
<dbReference type="CDD" id="cd00310">
    <property type="entry name" value="ATP-synt_Fo_a_6"/>
    <property type="match status" value="1"/>
</dbReference>
<dbReference type="FunFam" id="1.20.120.220:FF:000009">
    <property type="entry name" value="ATP synthase subunit a"/>
    <property type="match status" value="1"/>
</dbReference>
<dbReference type="Gene3D" id="1.20.120.220">
    <property type="entry name" value="ATP synthase, F0 complex, subunit A"/>
    <property type="match status" value="1"/>
</dbReference>
<dbReference type="HAMAP" id="MF_01393">
    <property type="entry name" value="ATP_synth_a_bact"/>
    <property type="match status" value="1"/>
</dbReference>
<dbReference type="InterPro" id="IPR045082">
    <property type="entry name" value="ATP_syn_F0_a_bact/chloroplast"/>
</dbReference>
<dbReference type="InterPro" id="IPR000568">
    <property type="entry name" value="ATP_synth_F0_asu"/>
</dbReference>
<dbReference type="InterPro" id="IPR023011">
    <property type="entry name" value="ATP_synth_F0_asu_AS"/>
</dbReference>
<dbReference type="InterPro" id="IPR035908">
    <property type="entry name" value="F0_ATP_A_sf"/>
</dbReference>
<dbReference type="NCBIfam" id="TIGR01131">
    <property type="entry name" value="ATP_synt_6_or_A"/>
    <property type="match status" value="1"/>
</dbReference>
<dbReference type="PANTHER" id="PTHR42823">
    <property type="entry name" value="ATP SYNTHASE SUBUNIT A, CHLOROPLASTIC"/>
    <property type="match status" value="1"/>
</dbReference>
<dbReference type="PANTHER" id="PTHR42823:SF3">
    <property type="entry name" value="ATP SYNTHASE SUBUNIT A, CHLOROPLASTIC"/>
    <property type="match status" value="1"/>
</dbReference>
<dbReference type="Pfam" id="PF00119">
    <property type="entry name" value="ATP-synt_A"/>
    <property type="match status" value="1"/>
</dbReference>
<dbReference type="PRINTS" id="PR00123">
    <property type="entry name" value="ATPASEA"/>
</dbReference>
<dbReference type="SUPFAM" id="SSF81336">
    <property type="entry name" value="F1F0 ATP synthase subunit A"/>
    <property type="match status" value="1"/>
</dbReference>
<dbReference type="PROSITE" id="PS00449">
    <property type="entry name" value="ATPASE_A"/>
    <property type="match status" value="1"/>
</dbReference>
<evidence type="ECO:0000255" key="1">
    <source>
        <dbReference type="HAMAP-Rule" id="MF_01393"/>
    </source>
</evidence>
<name>ATP6_MYCBO</name>
<accession>P63655</accession>
<accession>A0A1R3XY01</accession>
<accession>Q10591</accession>
<accession>X2BHP5</accession>
<organism>
    <name type="scientific">Mycobacterium bovis (strain ATCC BAA-935 / AF2122/97)</name>
    <dbReference type="NCBI Taxonomy" id="233413"/>
    <lineage>
        <taxon>Bacteria</taxon>
        <taxon>Bacillati</taxon>
        <taxon>Actinomycetota</taxon>
        <taxon>Actinomycetes</taxon>
        <taxon>Mycobacteriales</taxon>
        <taxon>Mycobacteriaceae</taxon>
        <taxon>Mycobacterium</taxon>
        <taxon>Mycobacterium tuberculosis complex</taxon>
    </lineage>
</organism>
<comment type="function">
    <text evidence="1">Key component of the proton channel; it plays a direct role in the translocation of protons across the membrane.</text>
</comment>
<comment type="subunit">
    <text evidence="1">F-type ATPases have 2 components, CF(1) - the catalytic core - and CF(0) - the membrane proton channel. CF(1) has five subunits: alpha(3), beta(3), gamma(1), delta(1), epsilon(1). CF(0) has three main subunits: a(1), b(2) and c(9-12). The alpha and beta chains form an alternating ring which encloses part of the gamma chain. CF(1) is attached to CF(0) by a central stalk formed by the gamma and epsilon chains, while a peripheral stalk is formed by the delta and b chains.</text>
</comment>
<comment type="subcellular location">
    <subcellularLocation>
        <location evidence="1">Cell membrane</location>
        <topology evidence="1">Multi-pass membrane protein</topology>
    </subcellularLocation>
</comment>
<comment type="similarity">
    <text evidence="1">Belongs to the ATPase A chain family.</text>
</comment>
<gene>
    <name evidence="1" type="primary">atpB</name>
    <name type="ordered locus">BQ2027_MB1336</name>
</gene>
<proteinExistence type="inferred from homology"/>
<protein>
    <recommendedName>
        <fullName evidence="1">ATP synthase subunit a</fullName>
    </recommendedName>
    <alternativeName>
        <fullName evidence="1">ATP synthase F0 sector subunit a</fullName>
    </alternativeName>
    <alternativeName>
        <fullName evidence="1">F-ATPase subunit 6</fullName>
    </alternativeName>
</protein>
<keyword id="KW-0066">ATP synthesis</keyword>
<keyword id="KW-1003">Cell membrane</keyword>
<keyword id="KW-0138">CF(0)</keyword>
<keyword id="KW-0375">Hydrogen ion transport</keyword>
<keyword id="KW-0406">Ion transport</keyword>
<keyword id="KW-0472">Membrane</keyword>
<keyword id="KW-1185">Reference proteome</keyword>
<keyword id="KW-0812">Transmembrane</keyword>
<keyword id="KW-1133">Transmembrane helix</keyword>
<keyword id="KW-0813">Transport</keyword>
<reference key="1">
    <citation type="journal article" date="2003" name="Proc. Natl. Acad. Sci. U.S.A.">
        <title>The complete genome sequence of Mycobacterium bovis.</title>
        <authorList>
            <person name="Garnier T."/>
            <person name="Eiglmeier K."/>
            <person name="Camus J.-C."/>
            <person name="Medina N."/>
            <person name="Mansoor H."/>
            <person name="Pryor M."/>
            <person name="Duthoy S."/>
            <person name="Grondin S."/>
            <person name="Lacroix C."/>
            <person name="Monsempe C."/>
            <person name="Simon S."/>
            <person name="Harris B."/>
            <person name="Atkin R."/>
            <person name="Doggett J."/>
            <person name="Mayes R."/>
            <person name="Keating L."/>
            <person name="Wheeler P.R."/>
            <person name="Parkhill J."/>
            <person name="Barrell B.G."/>
            <person name="Cole S.T."/>
            <person name="Gordon S.V."/>
            <person name="Hewinson R.G."/>
        </authorList>
    </citation>
    <scope>NUCLEOTIDE SEQUENCE [LARGE SCALE GENOMIC DNA]</scope>
    <source>
        <strain>ATCC BAA-935 / AF2122/97</strain>
    </source>
</reference>
<reference key="2">
    <citation type="journal article" date="2017" name="Genome Announc.">
        <title>Updated reference genome sequence and annotation of Mycobacterium bovis AF2122/97.</title>
        <authorList>
            <person name="Malone K.M."/>
            <person name="Farrell D."/>
            <person name="Stuber T.P."/>
            <person name="Schubert O.T."/>
            <person name="Aebersold R."/>
            <person name="Robbe-Austerman S."/>
            <person name="Gordon S.V."/>
        </authorList>
    </citation>
    <scope>NUCLEOTIDE SEQUENCE [LARGE SCALE GENOMIC DNA]</scope>
    <scope>GENOME REANNOTATION</scope>
    <source>
        <strain>ATCC BAA-935 / AF2122/97</strain>
    </source>
</reference>
<sequence length="250" mass="27467">MTETILAAQIEVGEHHTATWLGMTVNTDTVLSTAIAGLIVIALAFYLRAKVTSTDVPGGVQLFFEAITIQMRNQVESAIGMRIAPFVLPLAVTIFVFILISNWLAVLPVQYTDKHGHTTELLKSAAADINYVLALALFVFVCYHTAGIWRRGIVGHPIKLLKGHVTLLAPINLVEEVAKPISLSLRLFGNIFAGGILVALIALFPPYIMWAPNAIWKAFDLFVGAIQAFIFALLTILYFSQAMELEEEHH</sequence>
<feature type="chain" id="PRO_0000082064" description="ATP synthase subunit a">
    <location>
        <begin position="1"/>
        <end position="250"/>
    </location>
</feature>
<feature type="transmembrane region" description="Helical" evidence="1">
    <location>
        <begin position="27"/>
        <end position="47"/>
    </location>
</feature>
<feature type="transmembrane region" description="Helical" evidence="1">
    <location>
        <begin position="86"/>
        <end position="106"/>
    </location>
</feature>
<feature type="transmembrane region" description="Helical" evidence="1">
    <location>
        <begin position="129"/>
        <end position="149"/>
    </location>
</feature>
<feature type="transmembrane region" description="Helical" evidence="1">
    <location>
        <begin position="191"/>
        <end position="211"/>
    </location>
</feature>
<feature type="transmembrane region" description="Helical" evidence="1">
    <location>
        <begin position="219"/>
        <end position="239"/>
    </location>
</feature>